<gene>
    <name type="primary">MED2</name>
    <name type="ordered locus">KLLA0F14751g</name>
</gene>
<organism>
    <name type="scientific">Kluyveromyces lactis (strain ATCC 8585 / CBS 2359 / DSM 70799 / NBRC 1267 / NRRL Y-1140 / WM37)</name>
    <name type="common">Yeast</name>
    <name type="synonym">Candida sphaerica</name>
    <dbReference type="NCBI Taxonomy" id="284590"/>
    <lineage>
        <taxon>Eukaryota</taxon>
        <taxon>Fungi</taxon>
        <taxon>Dikarya</taxon>
        <taxon>Ascomycota</taxon>
        <taxon>Saccharomycotina</taxon>
        <taxon>Saccharomycetes</taxon>
        <taxon>Saccharomycetales</taxon>
        <taxon>Saccharomycetaceae</taxon>
        <taxon>Kluyveromyces</taxon>
    </lineage>
</organism>
<sequence>MVPKTGVSDRQENKLTQYFDDILRLSADLLTQQQLKTIKLDPKVTTGFSKAQQKGLGDRITQFYSLLDTLDVSLQTTADYVGAVKDSALQLKKQREEEQIKKQEQEKLERQLLEQQKLEQQQLEQKQLKQKQQQQQQQQQQQQQQQPQEQQHEQQQRYSAKNTPIDMLTNFDTDLPSAGITQAQSFNSEFGDLNGMDLSMFDSMDNQVGFGGLQNTSGGNEKKNDPQINFNDTNAPPSAVNVPENGNPSSYLTLNDFNDLGIDWNAANDNNELNLEDFNI</sequence>
<keyword id="KW-0010">Activator</keyword>
<keyword id="KW-0539">Nucleus</keyword>
<keyword id="KW-1185">Reference proteome</keyword>
<keyword id="KW-0804">Transcription</keyword>
<keyword id="KW-0805">Transcription regulation</keyword>
<evidence type="ECO:0000250" key="1"/>
<evidence type="ECO:0000256" key="2">
    <source>
        <dbReference type="SAM" id="MobiDB-lite"/>
    </source>
</evidence>
<evidence type="ECO:0000305" key="3"/>
<name>MED2_KLULA</name>
<accession>Q6CJZ6</accession>
<proteinExistence type="inferred from homology"/>
<comment type="function">
    <text evidence="1">Component of the Mediator complex, a coactivator involved in the regulated transcription of nearly all RNA polymerase II-dependent genes. Mediator functions as a bridge to convey information from gene-specific regulatory proteins to the basal RNA polymerase II transcription machinery. Mediator is recruited to promoters by direct interactions with regulatory proteins and serves as a scaffold for the assembly of a functional preinitiation complex with RNA polymerase II and the general transcription factors (By similarity).</text>
</comment>
<comment type="subunit">
    <text evidence="1">Component of the Mediator complex.</text>
</comment>
<comment type="subcellular location">
    <subcellularLocation>
        <location evidence="1">Nucleus</location>
    </subcellularLocation>
</comment>
<comment type="similarity">
    <text evidence="3">Belongs to the Mediator complex subunit 2 family.</text>
</comment>
<dbReference type="EMBL" id="CR382126">
    <property type="protein sequence ID" value="CAG98451.1"/>
    <property type="molecule type" value="Genomic_DNA"/>
</dbReference>
<dbReference type="RefSeq" id="XP_455743.1">
    <property type="nucleotide sequence ID" value="XM_455743.1"/>
</dbReference>
<dbReference type="SMR" id="Q6CJZ6"/>
<dbReference type="FunCoup" id="Q6CJZ6">
    <property type="interactions" value="143"/>
</dbReference>
<dbReference type="STRING" id="284590.Q6CJZ6"/>
<dbReference type="PaxDb" id="284590-Q6CJZ6"/>
<dbReference type="KEGG" id="kla:KLLA0_F14751g"/>
<dbReference type="eggNOG" id="ENOG502RZB6">
    <property type="taxonomic scope" value="Eukaryota"/>
</dbReference>
<dbReference type="HOGENOM" id="CLU_046031_0_0_1"/>
<dbReference type="InParanoid" id="Q6CJZ6"/>
<dbReference type="OMA" id="AEMMMQQ"/>
<dbReference type="Proteomes" id="UP000000598">
    <property type="component" value="Chromosome F"/>
</dbReference>
<dbReference type="GO" id="GO:0005634">
    <property type="term" value="C:nucleus"/>
    <property type="evidence" value="ECO:0007669"/>
    <property type="project" value="UniProtKB-SubCell"/>
</dbReference>
<dbReference type="InterPro" id="IPR021017">
    <property type="entry name" value="Mediator_Med2_fun"/>
</dbReference>
<dbReference type="Pfam" id="PF11214">
    <property type="entry name" value="Med2"/>
    <property type="match status" value="1"/>
</dbReference>
<protein>
    <recommendedName>
        <fullName>Mediator of RNA polymerase II transcription subunit 2</fullName>
    </recommendedName>
    <alternativeName>
        <fullName>Mediator complex subunit 2</fullName>
    </alternativeName>
</protein>
<reference key="1">
    <citation type="journal article" date="2004" name="Nature">
        <title>Genome evolution in yeasts.</title>
        <authorList>
            <person name="Dujon B."/>
            <person name="Sherman D."/>
            <person name="Fischer G."/>
            <person name="Durrens P."/>
            <person name="Casaregola S."/>
            <person name="Lafontaine I."/>
            <person name="de Montigny J."/>
            <person name="Marck C."/>
            <person name="Neuveglise C."/>
            <person name="Talla E."/>
            <person name="Goffard N."/>
            <person name="Frangeul L."/>
            <person name="Aigle M."/>
            <person name="Anthouard V."/>
            <person name="Babour A."/>
            <person name="Barbe V."/>
            <person name="Barnay S."/>
            <person name="Blanchin S."/>
            <person name="Beckerich J.-M."/>
            <person name="Beyne E."/>
            <person name="Bleykasten C."/>
            <person name="Boisrame A."/>
            <person name="Boyer J."/>
            <person name="Cattolico L."/>
            <person name="Confanioleri F."/>
            <person name="de Daruvar A."/>
            <person name="Despons L."/>
            <person name="Fabre E."/>
            <person name="Fairhead C."/>
            <person name="Ferry-Dumazet H."/>
            <person name="Groppi A."/>
            <person name="Hantraye F."/>
            <person name="Hennequin C."/>
            <person name="Jauniaux N."/>
            <person name="Joyet P."/>
            <person name="Kachouri R."/>
            <person name="Kerrest A."/>
            <person name="Koszul R."/>
            <person name="Lemaire M."/>
            <person name="Lesur I."/>
            <person name="Ma L."/>
            <person name="Muller H."/>
            <person name="Nicaud J.-M."/>
            <person name="Nikolski M."/>
            <person name="Oztas S."/>
            <person name="Ozier-Kalogeropoulos O."/>
            <person name="Pellenz S."/>
            <person name="Potier S."/>
            <person name="Richard G.-F."/>
            <person name="Straub M.-L."/>
            <person name="Suleau A."/>
            <person name="Swennen D."/>
            <person name="Tekaia F."/>
            <person name="Wesolowski-Louvel M."/>
            <person name="Westhof E."/>
            <person name="Wirth B."/>
            <person name="Zeniou-Meyer M."/>
            <person name="Zivanovic Y."/>
            <person name="Bolotin-Fukuhara M."/>
            <person name="Thierry A."/>
            <person name="Bouchier C."/>
            <person name="Caudron B."/>
            <person name="Scarpelli C."/>
            <person name="Gaillardin C."/>
            <person name="Weissenbach J."/>
            <person name="Wincker P."/>
            <person name="Souciet J.-L."/>
        </authorList>
    </citation>
    <scope>NUCLEOTIDE SEQUENCE [LARGE SCALE GENOMIC DNA]</scope>
    <source>
        <strain>ATCC 8585 / CBS 2359 / DSM 70799 / NBRC 1267 / NRRL Y-1140 / WM37</strain>
    </source>
</reference>
<feature type="chain" id="PRO_0000302015" description="Mediator of RNA polymerase II transcription subunit 2">
    <location>
        <begin position="1"/>
        <end position="280"/>
    </location>
</feature>
<feature type="region of interest" description="Disordered" evidence="2">
    <location>
        <begin position="212"/>
        <end position="247"/>
    </location>
</feature>
<feature type="compositionally biased region" description="Polar residues" evidence="2">
    <location>
        <begin position="226"/>
        <end position="236"/>
    </location>
</feature>